<sequence>MPKLVTWMNNQRVGELTKLANGAHTFKYAPEWLASRYARPLSLSLPLQRGNITSDAVFNFFDNLLPDSPIVRDRIVKRYHAKSRQPFDLLSEIGRDSVGAVTLIPEDETVTHPIMAWEKLTEARLEEVLTAYKADIPLGMIREENDFRISVAGAQEKTALLRIGNDWCIPKGITPTTHIIKLPIGEIRQPNATLDLSQSVDNEYYCLLLAKELGLNVPDAEIIKAGNVRALAVERFDRRWNAERTVLLRLPQEDMCQTFGLPSSVKYESDGGPGIARIMAFLMGSSEALKDRYDFMKFQVFQWLIGATDGHAKNFSVFIQAGGSYRLTPFYDIISAFPVLGGTGIHISDLKLAMGLNASKGKKTAIDKIYPRHFLATAKVLRFPEVQMHEILSDFARMIPAALDNVKTSLPTDFPENVVTAVESNVLRLHGRLSREYGSK</sequence>
<keyword id="KW-0002">3D-structure</keyword>
<keyword id="KW-0046">Antibiotic resistance</keyword>
<keyword id="KW-0067">ATP-binding</keyword>
<keyword id="KW-0903">Direct protein sequencing</keyword>
<keyword id="KW-0238">DNA-binding</keyword>
<keyword id="KW-0418">Kinase</keyword>
<keyword id="KW-0547">Nucleotide-binding</keyword>
<keyword id="KW-0597">Phosphoprotein</keyword>
<keyword id="KW-1185">Reference proteome</keyword>
<keyword id="KW-0678">Repressor</keyword>
<keyword id="KW-0723">Serine/threonine-protein kinase</keyword>
<keyword id="KW-1277">Toxin-antitoxin system</keyword>
<keyword id="KW-0808">Transferase</keyword>
<evidence type="ECO:0000269" key="1">
    <source>
    </source>
</evidence>
<evidence type="ECO:0000269" key="2">
    <source>
    </source>
</evidence>
<evidence type="ECO:0000269" key="3">
    <source>
    </source>
</evidence>
<evidence type="ECO:0000269" key="4">
    <source>
    </source>
</evidence>
<evidence type="ECO:0000269" key="5">
    <source>
    </source>
</evidence>
<evidence type="ECO:0000269" key="6">
    <source>
    </source>
</evidence>
<evidence type="ECO:0000269" key="7">
    <source>
    </source>
</evidence>
<evidence type="ECO:0000269" key="8">
    <source>
    </source>
</evidence>
<evidence type="ECO:0000269" key="9">
    <source>
    </source>
</evidence>
<evidence type="ECO:0000269" key="10">
    <source>
    </source>
</evidence>
<evidence type="ECO:0000269" key="11">
    <source>
    </source>
</evidence>
<evidence type="ECO:0000269" key="12">
    <source>
    </source>
</evidence>
<evidence type="ECO:0000269" key="13">
    <source>
    </source>
</evidence>
<evidence type="ECO:0000269" key="14">
    <source>
    </source>
</evidence>
<evidence type="ECO:0000269" key="15">
    <source>
    </source>
</evidence>
<evidence type="ECO:0000269" key="16">
    <source>
    </source>
</evidence>
<evidence type="ECO:0000269" key="17">
    <source>
    </source>
</evidence>
<evidence type="ECO:0000305" key="18"/>
<evidence type="ECO:0000305" key="19">
    <source>
    </source>
</evidence>
<evidence type="ECO:0000305" key="20">
    <source>
    </source>
</evidence>
<evidence type="ECO:0000305" key="21">
    <source>
    </source>
</evidence>
<evidence type="ECO:0007744" key="22">
    <source>
        <dbReference type="PDB" id="2WIU"/>
    </source>
</evidence>
<evidence type="ECO:0007744" key="23">
    <source>
        <dbReference type="PDB" id="3DNT"/>
    </source>
</evidence>
<evidence type="ECO:0007744" key="24">
    <source>
        <dbReference type="PDB" id="3DNU"/>
    </source>
</evidence>
<evidence type="ECO:0007744" key="25">
    <source>
        <dbReference type="PDB" id="3DNV"/>
    </source>
</evidence>
<evidence type="ECO:0007744" key="26">
    <source>
        <dbReference type="PDB" id="3FBR"/>
    </source>
</evidence>
<evidence type="ECO:0007744" key="27">
    <source>
        <dbReference type="PDB" id="3HZI"/>
    </source>
</evidence>
<evidence type="ECO:0007744" key="28">
    <source>
        <dbReference type="PDB" id="3TPB"/>
    </source>
</evidence>
<evidence type="ECO:0007744" key="29">
    <source>
        <dbReference type="PDB" id="3TPD"/>
    </source>
</evidence>
<evidence type="ECO:0007744" key="30">
    <source>
        <dbReference type="PDB" id="3TPE"/>
    </source>
</evidence>
<evidence type="ECO:0007744" key="31">
    <source>
        <dbReference type="PDB" id="3TPT"/>
    </source>
</evidence>
<evidence type="ECO:0007744" key="32">
    <source>
        <dbReference type="PDB" id="3TPV"/>
    </source>
</evidence>
<evidence type="ECO:0007744" key="33">
    <source>
        <dbReference type="PDB" id="4YG7"/>
    </source>
</evidence>
<evidence type="ECO:0007744" key="34">
    <source>
        <dbReference type="PDB" id="5K98"/>
    </source>
</evidence>
<evidence type="ECO:0007829" key="35">
    <source>
        <dbReference type="PDB" id="2WIU"/>
    </source>
</evidence>
<evidence type="ECO:0007829" key="36">
    <source>
        <dbReference type="PDB" id="3DNT"/>
    </source>
</evidence>
<evidence type="ECO:0007829" key="37">
    <source>
        <dbReference type="PDB" id="3DNU"/>
    </source>
</evidence>
<evidence type="ECO:0007829" key="38">
    <source>
        <dbReference type="PDB" id="3DNV"/>
    </source>
</evidence>
<evidence type="ECO:0007829" key="39">
    <source>
        <dbReference type="PDB" id="3FBR"/>
    </source>
</evidence>
<evidence type="ECO:0007829" key="40">
    <source>
        <dbReference type="PDB" id="3TPD"/>
    </source>
</evidence>
<evidence type="ECO:0007829" key="41">
    <source>
        <dbReference type="PDB" id="3TPE"/>
    </source>
</evidence>
<evidence type="ECO:0007829" key="42">
    <source>
        <dbReference type="PDB" id="3TPV"/>
    </source>
</evidence>
<protein>
    <recommendedName>
        <fullName>Serine/threonine-protein kinase toxin HipA</fullName>
        <shortName>Ser/Thr-protein kinase HipA</shortName>
        <ecNumber evidence="4">2.7.11.1</ecNumber>
    </recommendedName>
    <alternativeName>
        <fullName>Toxin HipA</fullName>
    </alternativeName>
</protein>
<feature type="chain" id="PRO_0000083988" description="Serine/threonine-protein kinase toxin HipA">
    <location>
        <begin position="1"/>
        <end position="440"/>
    </location>
</feature>
<feature type="DNA-binding region" evidence="4">
    <location>
        <begin position="379"/>
        <end position="382"/>
    </location>
</feature>
<feature type="active site" description="Proton acceptor" evidence="19">
    <location>
        <position position="309"/>
    </location>
</feature>
<feature type="binding site" evidence="7 23 26 27 31">
    <location>
        <begin position="152"/>
        <end position="157"/>
    </location>
    <ligand>
        <name>ATP</name>
        <dbReference type="ChEBI" id="CHEBI:30616"/>
    </ligand>
</feature>
<feature type="binding site" evidence="7 23 27 31">
    <location>
        <position position="181"/>
    </location>
    <ligand>
        <name>ATP</name>
        <dbReference type="ChEBI" id="CHEBI:30616"/>
    </ligand>
</feature>
<feature type="binding site" evidence="7 23 26 27 31">
    <location>
        <begin position="234"/>
        <end position="236"/>
    </location>
    <ligand>
        <name>ATP</name>
        <dbReference type="ChEBI" id="CHEBI:30616"/>
    </ligand>
</feature>
<feature type="binding site" evidence="7 23 26 27 31">
    <location>
        <begin position="311"/>
        <end position="314"/>
    </location>
    <ligand>
        <name>ATP</name>
        <dbReference type="ChEBI" id="CHEBI:30616"/>
    </ligand>
</feature>
<feature type="binding site" evidence="7 23 26 27 31">
    <location>
        <begin position="331"/>
        <end position="332"/>
    </location>
    <ligand>
        <name>ATP</name>
        <dbReference type="ChEBI" id="CHEBI:30616"/>
    </ligand>
</feature>
<feature type="modified residue" description="Phosphoserine; by autocatalysis" evidence="3 7">
    <location>
        <position position="150"/>
    </location>
</feature>
<feature type="mutagenesis site" description="Loss of toxicity, does not confer high persistence. Single mutation has decreased affinity for HipB-operator. Loss of toxicity, high levels of persister cells and cold sensitivity, decreased affinity for HipB; in hipA7; when associated with A-291." evidence="1 6 14">
    <original>G</original>
    <variation>S</variation>
    <location>
        <position position="22"/>
    </location>
</feature>
<feature type="mutagenesis site" description="High levels of persister cells formed which survive better than wild-type in ampicillin or ciprofloxacin, decreased affinity for HipB-operator." evidence="14">
    <original>P</original>
    <variation>L</variation>
    <location>
        <position position="86"/>
    </location>
</feature>
<feature type="mutagenesis site" description="Loss of toxicity, still confers high levels of persister cells. Decreased affinity for HipB-operator." evidence="1 14">
    <original>D</original>
    <variation>N</variation>
    <location>
        <position position="88"/>
    </location>
</feature>
<feature type="mutagenesis site" description="No phosphorylation; cells grow normally." evidence="3">
    <original>S</original>
    <variation>A</variation>
    <location>
        <position position="150"/>
    </location>
</feature>
<feature type="mutagenesis site" description="Retains toxicity and high persistence but not cold-sensitive. Loss of toxicity, high levels of persister cells and cold sensitivity, decreased affinity for HipB; in hipA7; when associated with S-22." evidence="1 6">
    <original>D</original>
    <variation>A</variation>
    <location>
        <position position="291"/>
    </location>
</feature>
<feature type="mutagenesis site" description="Loss of autophosphorylation; cells grow normally; protein can accumulate to high levels in E.coli." evidence="3">
    <original>D</original>
    <variation>Q</variation>
    <location>
        <position position="309"/>
    </location>
</feature>
<feature type="mutagenesis site" description="Loss of autophosphorylation; cells grow normally." evidence="3">
    <original>D</original>
    <variation>Q</variation>
    <location>
        <position position="332"/>
    </location>
</feature>
<feature type="sequence conflict" description="In Ref. 1; AAA56878." evidence="18" ref="1">
    <original>P</original>
    <variation>Q</variation>
    <location>
        <position position="40"/>
    </location>
</feature>
<feature type="sequence conflict" description="In Ref. 1; AAA56878." evidence="18" ref="1">
    <original>GL</original>
    <variation>WV</variation>
    <location>
        <begin position="214"/>
        <end position="215"/>
    </location>
</feature>
<feature type="sequence conflict" description="In Ref. 1; AAA56878." evidence="18" ref="1">
    <original>G</original>
    <variation>R</variation>
    <location>
        <position position="274"/>
    </location>
</feature>
<feature type="strand" evidence="40">
    <location>
        <begin position="3"/>
        <end position="8"/>
    </location>
</feature>
<feature type="strand" evidence="40">
    <location>
        <begin position="11"/>
        <end position="18"/>
    </location>
</feature>
<feature type="strand" evidence="40">
    <location>
        <begin position="24"/>
        <end position="28"/>
    </location>
</feature>
<feature type="helix" evidence="40">
    <location>
        <begin position="30"/>
        <end position="34"/>
    </location>
</feature>
<feature type="strand" evidence="38">
    <location>
        <begin position="35"/>
        <end position="37"/>
    </location>
</feature>
<feature type="strand" evidence="36">
    <location>
        <begin position="49"/>
        <end position="52"/>
    </location>
</feature>
<feature type="helix" evidence="40">
    <location>
        <begin position="55"/>
        <end position="62"/>
    </location>
</feature>
<feature type="strand" evidence="35">
    <location>
        <begin position="65"/>
        <end position="67"/>
    </location>
</feature>
<feature type="helix" evidence="40">
    <location>
        <begin position="69"/>
        <end position="79"/>
    </location>
</feature>
<feature type="strand" evidence="42">
    <location>
        <begin position="82"/>
        <end position="85"/>
    </location>
</feature>
<feature type="helix" evidence="40">
    <location>
        <begin position="86"/>
        <end position="93"/>
    </location>
</feature>
<feature type="strand" evidence="36">
    <location>
        <begin position="98"/>
        <end position="100"/>
    </location>
</feature>
<feature type="strand" evidence="40">
    <location>
        <begin position="101"/>
        <end position="104"/>
    </location>
</feature>
<feature type="strand" evidence="39">
    <location>
        <begin position="114"/>
        <end position="116"/>
    </location>
</feature>
<feature type="strand" evidence="40">
    <location>
        <begin position="117"/>
        <end position="119"/>
    </location>
</feature>
<feature type="helix" evidence="40">
    <location>
        <begin position="122"/>
        <end position="130"/>
    </location>
</feature>
<feature type="turn" evidence="37">
    <location>
        <begin position="131"/>
        <end position="133"/>
    </location>
</feature>
<feature type="helix" evidence="36">
    <location>
        <begin position="137"/>
        <end position="139"/>
    </location>
</feature>
<feature type="strand" evidence="41">
    <location>
        <begin position="149"/>
        <end position="152"/>
    </location>
</feature>
<feature type="strand" evidence="37">
    <location>
        <begin position="153"/>
        <end position="155"/>
    </location>
</feature>
<feature type="strand" evidence="40">
    <location>
        <begin position="158"/>
        <end position="163"/>
    </location>
</feature>
<feature type="strand" evidence="40">
    <location>
        <begin position="166"/>
        <end position="170"/>
    </location>
</feature>
<feature type="strand" evidence="40">
    <location>
        <begin position="178"/>
        <end position="181"/>
    </location>
</feature>
<feature type="strand" evidence="41">
    <location>
        <begin position="185"/>
        <end position="188"/>
    </location>
</feature>
<feature type="strand" evidence="39">
    <location>
        <begin position="189"/>
        <end position="191"/>
    </location>
</feature>
<feature type="strand" evidence="41">
    <location>
        <begin position="193"/>
        <end position="196"/>
    </location>
</feature>
<feature type="helix" evidence="40">
    <location>
        <begin position="199"/>
        <end position="212"/>
    </location>
</feature>
<feature type="strand" evidence="40">
    <location>
        <begin position="220"/>
        <end position="225"/>
    </location>
</feature>
<feature type="strand" evidence="40">
    <location>
        <begin position="228"/>
        <end position="234"/>
    </location>
</feature>
<feature type="strand" evidence="40">
    <location>
        <begin position="236"/>
        <end position="240"/>
    </location>
</feature>
<feature type="strand" evidence="40">
    <location>
        <begin position="247"/>
        <end position="249"/>
    </location>
</feature>
<feature type="strand" evidence="40">
    <location>
        <begin position="252"/>
        <end position="254"/>
    </location>
</feature>
<feature type="helix" evidence="40">
    <location>
        <begin position="255"/>
        <end position="258"/>
    </location>
</feature>
<feature type="helix" evidence="40">
    <location>
        <begin position="263"/>
        <end position="265"/>
    </location>
</feature>
<feature type="helix" evidence="40">
    <location>
        <begin position="268"/>
        <end position="270"/>
    </location>
</feature>
<feature type="helix" evidence="40">
    <location>
        <begin position="275"/>
        <end position="282"/>
    </location>
</feature>
<feature type="helix" evidence="40">
    <location>
        <begin position="288"/>
        <end position="304"/>
    </location>
</feature>
<feature type="helix" evidence="40">
    <location>
        <begin position="312"/>
        <end position="314"/>
    </location>
</feature>
<feature type="strand" evidence="40">
    <location>
        <begin position="316"/>
        <end position="319"/>
    </location>
</feature>
<feature type="helix" evidence="40">
    <location>
        <begin position="321"/>
        <end position="323"/>
    </location>
</feature>
<feature type="strand" evidence="40">
    <location>
        <begin position="325"/>
        <end position="327"/>
    </location>
</feature>
<feature type="helix" evidence="40">
    <location>
        <begin position="337"/>
        <end position="339"/>
    </location>
</feature>
<feature type="strand" evidence="40">
    <location>
        <begin position="342"/>
        <end position="344"/>
    </location>
</feature>
<feature type="helix" evidence="40">
    <location>
        <begin position="347"/>
        <end position="349"/>
    </location>
</feature>
<feature type="strand" evidence="40">
    <location>
        <begin position="351"/>
        <end position="358"/>
    </location>
</feature>
<feature type="strand" evidence="40">
    <location>
        <begin position="361"/>
        <end position="365"/>
    </location>
</feature>
<feature type="helix" evidence="40">
    <location>
        <begin position="366"/>
        <end position="368"/>
    </location>
</feature>
<feature type="helix" evidence="40">
    <location>
        <begin position="371"/>
        <end position="381"/>
    </location>
</feature>
<feature type="helix" evidence="40">
    <location>
        <begin position="385"/>
        <end position="407"/>
    </location>
</feature>
<feature type="strand" evidence="39">
    <location>
        <begin position="412"/>
        <end position="414"/>
    </location>
</feature>
<feature type="helix" evidence="40">
    <location>
        <begin position="416"/>
        <end position="434"/>
    </location>
</feature>
<accession>P23874</accession>
<accession>P76139</accession>
<accession>P76880</accession>
<accession>P77507</accession>
<dbReference type="EC" id="2.7.11.1" evidence="4"/>
<dbReference type="EMBL" id="M61242">
    <property type="protein sequence ID" value="AAA56878.1"/>
    <property type="molecule type" value="Genomic_DNA"/>
</dbReference>
<dbReference type="EMBL" id="U00096">
    <property type="protein sequence ID" value="AAC74580.1"/>
    <property type="molecule type" value="Genomic_DNA"/>
</dbReference>
<dbReference type="EMBL" id="AP009048">
    <property type="protein sequence ID" value="BAA15179.2"/>
    <property type="molecule type" value="Genomic_DNA"/>
</dbReference>
<dbReference type="PIR" id="F64904">
    <property type="entry name" value="F64904"/>
</dbReference>
<dbReference type="RefSeq" id="NP_416024.1">
    <property type="nucleotide sequence ID" value="NC_000913.3"/>
</dbReference>
<dbReference type="RefSeq" id="WP_001125439.1">
    <property type="nucleotide sequence ID" value="NZ_SSZK01000001.1"/>
</dbReference>
<dbReference type="PDB" id="2WIU">
    <property type="method" value="X-ray"/>
    <property type="resolution" value="2.35 A"/>
    <property type="chains" value="A/C=1-440"/>
</dbReference>
<dbReference type="PDB" id="3DNT">
    <property type="method" value="X-ray"/>
    <property type="resolution" value="1.66 A"/>
    <property type="chains" value="A/B=1-440"/>
</dbReference>
<dbReference type="PDB" id="3DNU">
    <property type="method" value="X-ray"/>
    <property type="resolution" value="1.54 A"/>
    <property type="chains" value="A=1-440"/>
</dbReference>
<dbReference type="PDB" id="3DNV">
    <property type="method" value="X-ray"/>
    <property type="resolution" value="2.68 A"/>
    <property type="chains" value="A=1-440"/>
</dbReference>
<dbReference type="PDB" id="3FBR">
    <property type="method" value="X-ray"/>
    <property type="resolution" value="3.50 A"/>
    <property type="chains" value="A=1-437"/>
</dbReference>
<dbReference type="PDB" id="3HZI">
    <property type="method" value="X-ray"/>
    <property type="resolution" value="2.98 A"/>
    <property type="chains" value="A=1-440"/>
</dbReference>
<dbReference type="PDB" id="3TPB">
    <property type="method" value="X-ray"/>
    <property type="resolution" value="1.88 A"/>
    <property type="chains" value="A=1-440"/>
</dbReference>
<dbReference type="PDB" id="3TPD">
    <property type="method" value="X-ray"/>
    <property type="resolution" value="1.50 A"/>
    <property type="chains" value="A=1-440"/>
</dbReference>
<dbReference type="PDB" id="3TPE">
    <property type="method" value="X-ray"/>
    <property type="resolution" value="1.90 A"/>
    <property type="chains" value="A=1-440"/>
</dbReference>
<dbReference type="PDB" id="3TPT">
    <property type="method" value="X-ray"/>
    <property type="resolution" value="2.25 A"/>
    <property type="chains" value="A/B=1-440"/>
</dbReference>
<dbReference type="PDB" id="3TPV">
    <property type="method" value="X-ray"/>
    <property type="resolution" value="2.30 A"/>
    <property type="chains" value="B=1-440"/>
</dbReference>
<dbReference type="PDB" id="4YG7">
    <property type="method" value="X-ray"/>
    <property type="resolution" value="3.77 A"/>
    <property type="chains" value="D/K=2-437"/>
</dbReference>
<dbReference type="PDB" id="5K98">
    <property type="method" value="X-ray"/>
    <property type="resolution" value="3.99 A"/>
    <property type="chains" value="A/D=2-440"/>
</dbReference>
<dbReference type="PDBsum" id="2WIU"/>
<dbReference type="PDBsum" id="3DNT"/>
<dbReference type="PDBsum" id="3DNU"/>
<dbReference type="PDBsum" id="3DNV"/>
<dbReference type="PDBsum" id="3FBR"/>
<dbReference type="PDBsum" id="3HZI"/>
<dbReference type="PDBsum" id="3TPB"/>
<dbReference type="PDBsum" id="3TPD"/>
<dbReference type="PDBsum" id="3TPE"/>
<dbReference type="PDBsum" id="3TPT"/>
<dbReference type="PDBsum" id="3TPV"/>
<dbReference type="PDBsum" id="4YG7"/>
<dbReference type="PDBsum" id="5K98"/>
<dbReference type="SMR" id="P23874"/>
<dbReference type="BioGRID" id="4260220">
    <property type="interactions" value="76"/>
</dbReference>
<dbReference type="ComplexPortal" id="CPX-180">
    <property type="entry name" value="HipBA toxin-antitoxin complex"/>
</dbReference>
<dbReference type="DIP" id="DIP-9898N"/>
<dbReference type="FunCoup" id="P23874">
    <property type="interactions" value="25"/>
</dbReference>
<dbReference type="IntAct" id="P23874">
    <property type="interactions" value="4"/>
</dbReference>
<dbReference type="STRING" id="511145.b1507"/>
<dbReference type="ChEMBL" id="CHEMBL4524022"/>
<dbReference type="iPTMnet" id="P23874"/>
<dbReference type="jPOST" id="P23874"/>
<dbReference type="PaxDb" id="511145-b1507"/>
<dbReference type="EnsemblBacteria" id="AAC74580">
    <property type="protein sequence ID" value="AAC74580"/>
    <property type="gene ID" value="b1507"/>
</dbReference>
<dbReference type="GeneID" id="946064"/>
<dbReference type="KEGG" id="ecj:JW1500"/>
<dbReference type="KEGG" id="eco:b1507"/>
<dbReference type="KEGG" id="ecoc:C3026_08720"/>
<dbReference type="PATRIC" id="fig|1411691.4.peg.760"/>
<dbReference type="EchoBASE" id="EB0438"/>
<dbReference type="eggNOG" id="COG3550">
    <property type="taxonomic scope" value="Bacteria"/>
</dbReference>
<dbReference type="HOGENOM" id="CLU_030167_2_1_6"/>
<dbReference type="InParanoid" id="P23874"/>
<dbReference type="OMA" id="SCENEWL"/>
<dbReference type="OrthoDB" id="9805913at2"/>
<dbReference type="PhylomeDB" id="P23874"/>
<dbReference type="BioCyc" id="EcoCyc:EG10443-MONOMER"/>
<dbReference type="BioCyc" id="MetaCyc:EG10443-MONOMER"/>
<dbReference type="EvolutionaryTrace" id="P23874"/>
<dbReference type="PRO" id="PR:P23874"/>
<dbReference type="Proteomes" id="UP000000625">
    <property type="component" value="Chromosome"/>
</dbReference>
<dbReference type="CollecTF" id="EXPREG_00000970"/>
<dbReference type="GO" id="GO:0005829">
    <property type="term" value="C:cytosol"/>
    <property type="evidence" value="ECO:0000314"/>
    <property type="project" value="EcoCyc"/>
</dbReference>
<dbReference type="GO" id="GO:0032993">
    <property type="term" value="C:protein-DNA complex"/>
    <property type="evidence" value="ECO:0000353"/>
    <property type="project" value="CollecTF"/>
</dbReference>
<dbReference type="GO" id="GO:0110001">
    <property type="term" value="C:toxin-antitoxin complex"/>
    <property type="evidence" value="ECO:0000353"/>
    <property type="project" value="ComplexPortal"/>
</dbReference>
<dbReference type="GO" id="GO:0005524">
    <property type="term" value="F:ATP binding"/>
    <property type="evidence" value="ECO:0000314"/>
    <property type="project" value="EcoCyc"/>
</dbReference>
<dbReference type="GO" id="GO:0001217">
    <property type="term" value="F:DNA-binding transcription repressor activity"/>
    <property type="evidence" value="ECO:0000353"/>
    <property type="project" value="CollecTF"/>
</dbReference>
<dbReference type="GO" id="GO:0000287">
    <property type="term" value="F:magnesium ion binding"/>
    <property type="evidence" value="ECO:0000314"/>
    <property type="project" value="EcoCyc"/>
</dbReference>
<dbReference type="GO" id="GO:0106310">
    <property type="term" value="F:protein serine kinase activity"/>
    <property type="evidence" value="ECO:0007669"/>
    <property type="project" value="RHEA"/>
</dbReference>
<dbReference type="GO" id="GO:0004674">
    <property type="term" value="F:protein serine/threonine kinase activity"/>
    <property type="evidence" value="ECO:0000314"/>
    <property type="project" value="EcoCyc"/>
</dbReference>
<dbReference type="GO" id="GO:0043565">
    <property type="term" value="F:sequence-specific DNA binding"/>
    <property type="evidence" value="ECO:0000269"/>
    <property type="project" value="CollecTF"/>
</dbReference>
<dbReference type="GO" id="GO:0000976">
    <property type="term" value="F:transcription cis-regulatory region binding"/>
    <property type="evidence" value="ECO:0000353"/>
    <property type="project" value="CollecTF"/>
</dbReference>
<dbReference type="GO" id="GO:0022611">
    <property type="term" value="P:dormancy process"/>
    <property type="evidence" value="ECO:0000314"/>
    <property type="project" value="EcoCyc"/>
</dbReference>
<dbReference type="GO" id="GO:0006355">
    <property type="term" value="P:regulation of DNA-templated transcription"/>
    <property type="evidence" value="ECO:0000314"/>
    <property type="project" value="ComplexPortal"/>
</dbReference>
<dbReference type="GO" id="GO:0040008">
    <property type="term" value="P:regulation of growth"/>
    <property type="evidence" value="ECO:0000314"/>
    <property type="project" value="ComplexPortal"/>
</dbReference>
<dbReference type="GO" id="GO:0046677">
    <property type="term" value="P:response to antibiotic"/>
    <property type="evidence" value="ECO:0007669"/>
    <property type="project" value="UniProtKB-KW"/>
</dbReference>
<dbReference type="GO" id="GO:0044010">
    <property type="term" value="P:single-species biofilm formation"/>
    <property type="evidence" value="ECO:0000315"/>
    <property type="project" value="EcoCyc"/>
</dbReference>
<dbReference type="CDD" id="cd17808">
    <property type="entry name" value="HipA_Ec_like"/>
    <property type="match status" value="1"/>
</dbReference>
<dbReference type="InterPro" id="IPR012893">
    <property type="entry name" value="HipA-like_C"/>
</dbReference>
<dbReference type="InterPro" id="IPR017508">
    <property type="entry name" value="HipA_N1"/>
</dbReference>
<dbReference type="InterPro" id="IPR052028">
    <property type="entry name" value="HipA_Ser/Thr_kinase"/>
</dbReference>
<dbReference type="NCBIfam" id="TIGR03071">
    <property type="entry name" value="couple_hipA"/>
    <property type="match status" value="1"/>
</dbReference>
<dbReference type="PANTHER" id="PTHR37419">
    <property type="entry name" value="SERINE/THREONINE-PROTEIN KINASE TOXIN HIPA"/>
    <property type="match status" value="1"/>
</dbReference>
<dbReference type="PANTHER" id="PTHR37419:SF1">
    <property type="entry name" value="SERINE_THREONINE-PROTEIN KINASE TOXIN HIPA"/>
    <property type="match status" value="1"/>
</dbReference>
<dbReference type="Pfam" id="PF13657">
    <property type="entry name" value="Couple_hipA"/>
    <property type="match status" value="1"/>
</dbReference>
<dbReference type="Pfam" id="PF07804">
    <property type="entry name" value="HipA_C"/>
    <property type="match status" value="1"/>
</dbReference>
<proteinExistence type="evidence at protein level"/>
<reference key="1">
    <citation type="journal article" date="1991" name="J. Bacteriol.">
        <title>Structure and organization of hip, an operon that affects lethality due to inhibition of peptidoglycan or DNA synthesis.</title>
        <authorList>
            <person name="Black D.S."/>
            <person name="Kelly A.J."/>
            <person name="Mardis M.J."/>
            <person name="Moyed H.S."/>
        </authorList>
    </citation>
    <scope>NUCLEOTIDE SEQUENCE [GENOMIC DNA]</scope>
    <source>
        <strain>K12</strain>
    </source>
</reference>
<reference key="2">
    <citation type="journal article" date="1997" name="Science">
        <title>The complete genome sequence of Escherichia coli K-12.</title>
        <authorList>
            <person name="Blattner F.R."/>
            <person name="Plunkett G. III"/>
            <person name="Bloch C.A."/>
            <person name="Perna N.T."/>
            <person name="Burland V."/>
            <person name="Riley M."/>
            <person name="Collado-Vides J."/>
            <person name="Glasner J.D."/>
            <person name="Rode C.K."/>
            <person name="Mayhew G.F."/>
            <person name="Gregor J."/>
            <person name="Davis N.W."/>
            <person name="Kirkpatrick H.A."/>
            <person name="Goeden M.A."/>
            <person name="Rose D.J."/>
            <person name="Mau B."/>
            <person name="Shao Y."/>
        </authorList>
    </citation>
    <scope>NUCLEOTIDE SEQUENCE [LARGE SCALE GENOMIC DNA]</scope>
    <source>
        <strain>K12 / MG1655 / ATCC 47076</strain>
    </source>
</reference>
<reference key="3">
    <citation type="journal article" date="2006" name="Mol. Syst. Biol.">
        <title>Highly accurate genome sequences of Escherichia coli K-12 strains MG1655 and W3110.</title>
        <authorList>
            <person name="Hayashi K."/>
            <person name="Morooka N."/>
            <person name="Yamamoto Y."/>
            <person name="Fujita K."/>
            <person name="Isono K."/>
            <person name="Choi S."/>
            <person name="Ohtsubo E."/>
            <person name="Baba T."/>
            <person name="Wanner B.L."/>
            <person name="Mori H."/>
            <person name="Horiuchi T."/>
        </authorList>
    </citation>
    <scope>NUCLEOTIDE SEQUENCE [LARGE SCALE GENOMIC DNA]</scope>
    <source>
        <strain>K12 / W3110 / ATCC 27325 / DSM 5911</strain>
    </source>
</reference>
<reference key="4">
    <citation type="journal article" date="2006" name="J. Bacteriol.">
        <title>Kinase activity of overexpressed HipA is required for growth arrest and multidrug tolerance in Escherichia coli.</title>
        <authorList>
            <person name="Correia F.F."/>
            <person name="D'Onofrio A."/>
            <person name="Rejtar T."/>
            <person name="Li L."/>
            <person name="Karger B.L."/>
            <person name="Makarova K."/>
            <person name="Koonin E.V."/>
            <person name="Lewis K."/>
        </authorList>
    </citation>
    <scope>PROTEIN SEQUENCE OF 134-157</scope>
    <scope>FUNCTION AS A KINASE</scope>
    <scope>ACTIVE SITE</scope>
    <scope>PHOSPHORYLATION AT SER-150</scope>
    <scope>ANTIBIOTIC TOLERANCE</scope>
    <scope>MUTAGENESIS OF SER-150; ASP-309 AND ASP-332</scope>
    <source>
        <strain>K12</strain>
    </source>
</reference>
<reference key="5">
    <citation type="journal article" date="1983" name="J. Bacteriol.">
        <title>hipA, a newly recognized gene of Escherichia coli K-12 that affects frequency of persistence after inhibition of murein synthesis.</title>
        <authorList>
            <person name="Moyed H.S."/>
            <person name="Bertrand K.P."/>
        </authorList>
    </citation>
    <scope>MUTANT HIPA7 ISOLATION</scope>
    <scope>FUNCTION IN ANTIBIOTIC TOLERANCE</scope>
    <scope>ROLE IN PERSISTENCE</scope>
    <source>
        <strain>K12</strain>
    </source>
</reference>
<reference key="6">
    <citation type="journal article" date="1986" name="J. Bacteriol.">
        <title>Molecular cloning and expression of hipA, a gene of Escherichia coli K-12 that affects frequency of persistence after inhibition of murein synthesis.</title>
        <authorList>
            <person name="Moyed H.S."/>
            <person name="Broderick S.H."/>
        </authorList>
    </citation>
    <scope>CLONING</scope>
    <source>
        <strain>K12</strain>
    </source>
</reference>
<reference key="7">
    <citation type="journal article" date="1994" name="J. Bacteriol.">
        <title>Autoregulation of hip, an operon that affects lethality due to inhibition of peptidoglycan or DNA synthesis.</title>
        <authorList>
            <person name="Black D.S."/>
            <person name="Irwin B."/>
            <person name="Moyed H.S."/>
        </authorList>
    </citation>
    <scope>FUNCTION AS A TOXIN</scope>
    <scope>FUNCTION AS A TRANSCRIPTIONAL REPRESSOR</scope>
    <scope>DISRUPTION PHENOTYPE</scope>
    <source>
        <strain>K12</strain>
    </source>
</reference>
<reference key="8">
    <citation type="journal article" date="2003" name="Mol. Microbiol.">
        <title>Characterization of the hipA7 allele of Escherichia coli and evidence that high persistence is governed by (p)ppGpp synthesis.</title>
        <authorList>
            <person name="Korch S.B."/>
            <person name="Henderson T.A."/>
            <person name="Hill T.M."/>
        </authorList>
    </citation>
    <scope>FUNCTION AS A TOXIN</scope>
    <scope>FUNCTION IN PERSISTENCE</scope>
    <scope>REQUIREMENT FOR (P)PPGPP</scope>
    <scope>MUTAGENESIS OF GLY-22; ASP-88 AND ASP-291</scope>
    <source>
        <strain>K12 / MG1655 / ATCC 47076</strain>
    </source>
</reference>
<reference key="9">
    <citation type="journal article" date="2006" name="J. Bacteriol.">
        <title>Ectopic overexpression of wild-type and mutant hipA genes in Escherichia coli: effects on macromolecular synthesis and persister formation.</title>
        <authorList>
            <person name="Korch S.B."/>
            <person name="Hill T.M."/>
        </authorList>
    </citation>
    <scope>FUNCTION AS A TOXIN</scope>
    <source>
        <strain>K12 / MG1655 / ATCC 47076</strain>
    </source>
</reference>
<reference key="10">
    <citation type="journal article" date="2010" name="Proc. Natl. Acad. Sci. U.S.A.">
        <title>Regulation of phenotypic variability by a threshold-based mechanism underlies bacterial persistence.</title>
        <authorList>
            <person name="Rotem E."/>
            <person name="Loinger A."/>
            <person name="Ronin I."/>
            <person name="Levin-Reisman I."/>
            <person name="Gabay C."/>
            <person name="Shoresh N."/>
            <person name="Biham O."/>
            <person name="Balaban N.Q."/>
        </authorList>
    </citation>
    <scope>FUNCTION</scope>
    <scope>SUBUNIT</scope>
    <scope>DISRUPTION PHENOTYPE</scope>
    <scope>MUTAGENESIS OF GLY-22 AND ASP-291</scope>
    <source>
        <strain>K12 / MG1655 / ATCC 47076</strain>
    </source>
</reference>
<reference key="11">
    <citation type="journal article" date="2013" name="J. Bacteriol.">
        <title>HipA-triggered growth arrest and beta-lactam tolerance in Escherichia coli are mediated by RelA-dependent ppGpp synthesis.</title>
        <authorList>
            <person name="Bokinsky G."/>
            <person name="Baidoo E.E."/>
            <person name="Akella S."/>
            <person name="Burd H."/>
            <person name="Weaver D."/>
            <person name="Alonso-Gutierrez J."/>
            <person name="Garcia-Martin H."/>
            <person name="Lee T.S."/>
            <person name="Keasling J.D."/>
        </authorList>
    </citation>
    <scope>FUNCTION</scope>
    <scope>ROLE IN PPGPP RESPONSE</scope>
</reference>
<reference key="12">
    <citation type="journal article" date="2013" name="J. Mol. Recognit.">
        <title>Interaction investigations of HipA binding to HipB dimer and HipB dimer + DNA complex: a molecular dynamics simulation study.</title>
        <authorList>
            <person name="Li C."/>
            <person name="Wang Y."/>
            <person name="Wang Y."/>
            <person name="Chen G."/>
        </authorList>
    </citation>
    <scope>SUBUNIT</scope>
    <scope>MODELING OF INTERACTION</scope>
</reference>
<reference key="13">
    <citation type="journal article" date="2013" name="Microbiology">
        <title>Escherichia coli toxin gene hipA affects biofilm formation and DNA release.</title>
        <authorList>
            <person name="Zhao J."/>
            <person name="Wang Q."/>
            <person name="Li M."/>
            <person name="Heijstra B.D."/>
            <person name="Wang S."/>
            <person name="Liang Q."/>
            <person name="Qi Q."/>
        </authorList>
    </citation>
    <scope>FUNCTION</scope>
    <scope>DISRUPTION PHENOTYPE</scope>
    <source>
        <strain>K12 / BW25113</strain>
    </source>
</reference>
<reference key="14">
    <citation type="journal article" date="2013" name="Mol. Cell">
        <title>Molecular mechanism of bacterial persistence by HipA.</title>
        <authorList>
            <person name="Germain E."/>
            <person name="Castro-Roa D."/>
            <person name="Zenkin N."/>
            <person name="Gerdes K."/>
        </authorList>
    </citation>
    <scope>FUNCTION</scope>
    <scope>INTERACTION WITH HIPB</scope>
    <scope>SUBUNIT</scope>
    <scope>MASS SPECTROMETRY</scope>
    <source>
        <strain>K12 / MG1655 / ATCC 47076</strain>
    </source>
</reference>
<reference key="15">
    <citation type="journal article" date="2013" name="Nat. Commun.">
        <title>HipA-mediated antibiotic persistence via phosphorylation of the glutamyl-tRNA-synthetase.</title>
        <authorList>
            <person name="Kaspy I."/>
            <person name="Rotem E."/>
            <person name="Weiss N."/>
            <person name="Ronin I."/>
            <person name="Balaban N.Q."/>
            <person name="Glaser G."/>
        </authorList>
    </citation>
    <scope>FUNCTION</scope>
    <source>
        <strain>K12 / MG1655 / ATCC 47076</strain>
    </source>
</reference>
<reference key="16">
    <citation type="journal article" date="2015" name="Proc. Natl. Acad. Sci. U.S.A.">
        <title>Stochastic induction of persister cells by HipA through (p)ppGpp-mediated activation of mRNA endonucleases.</title>
        <authorList>
            <person name="Germain E."/>
            <person name="Roghanian M."/>
            <person name="Gerdes K."/>
            <person name="Maisonneuve E."/>
        </authorList>
    </citation>
    <scope>RETRACTED PAPER</scope>
    <source>
        <strain>K12 / MG1655 / ATCC 47076</strain>
    </source>
</reference>
<reference key="17">
    <citation type="journal article" date="2019" name="Proc. Natl. Acad. Sci. U.S.A.">
        <authorList>
            <person name="Germain E."/>
            <person name="Roghanian M."/>
            <person name="Gerdes K."/>
            <person name="Maisonneuve E."/>
        </authorList>
    </citation>
    <scope>RETRACTION NOTICE OF PUBMED:25848049</scope>
</reference>
<reference key="18">
    <citation type="journal article" date="2015" name="Mol. Microbiol.">
        <title>Escherichia coli persister cells suppress translation by selectively disassembling and degrading their ribosomes.</title>
        <authorList>
            <person name="Cho J."/>
            <person name="Rogers J."/>
            <person name="Kearns M."/>
            <person name="Leslie M."/>
            <person name="Hartson S.D."/>
            <person name="Wilson K.S."/>
        </authorList>
    </citation>
    <scope>FUNCTION</scope>
    <scope>MUTAGENESIS OF GLY-22 AND ASP-291</scope>
</reference>
<reference key="19">
    <citation type="journal article" date="2017" name="FEMS Microbiol. Lett.">
        <title>Characterization of YjjJ toxin of Escherichia coli.</title>
        <authorList>
            <person name="Maeda Y."/>
            <person name="Lin C.Y."/>
            <person name="Ishida Y."/>
            <person name="Inouye M."/>
            <person name="Yamaguchi Y."/>
            <person name="Phadtare S."/>
        </authorList>
    </citation>
    <scope>FUNCTION AS A TOXIN</scope>
    <source>
        <strain>B / BL21-DE3</strain>
    </source>
</reference>
<reference evidence="22" key="20">
    <citation type="journal article" date="2009" name="Acta Crystallogr. D">
        <title>New kinase regulation mechanism found in HipBA: a bacterial persistence switch.</title>
        <authorList>
            <person name="Evdokimov A."/>
            <person name="Voznesensky I."/>
            <person name="Fennell K."/>
            <person name="Anderson M."/>
            <person name="Smith J.F."/>
            <person name="Fisher D.A."/>
        </authorList>
    </citation>
    <scope>X-RAY CRYSTALLOGRAPHY (2.35 ANGSTROMS) IN COMPLEX WITH HIPB</scope>
    <scope>SUBUNIT</scope>
    <source>
        <strain>K12 / DH5-alpha</strain>
    </source>
</reference>
<reference evidence="23 24 25 26 27" key="21">
    <citation type="journal article" date="2009" name="Science">
        <title>Molecular mechanisms of HipA-mediated multidrug tolerance and its neutralization by HipB.</title>
        <authorList>
            <person name="Schumacher M.A."/>
            <person name="Piro K.M."/>
            <person name="Xu W."/>
            <person name="Hansen S."/>
            <person name="Lewis K."/>
            <person name="Brennan R.G."/>
        </authorList>
    </citation>
    <scope>X-RAY CRYSTALLOGRAPHY (1.54 ANGSTROMS) ALONE AND IN COMPLEX WITH MG-ATP</scope>
    <scope>HIPB AND DNA</scope>
    <scope>FUNCTION AS A KINASE</scope>
    <scope>CATALYTIC ACTIVITY</scope>
    <scope>ATP-BINDING</scope>
    <scope>DNA-BINDING</scope>
    <scope>SUBSTRATE</scope>
    <scope>SUBUNIT</scope>
</reference>
<reference evidence="28 29 30 31 32" key="22">
    <citation type="journal article" date="2012" name="Cell Rep.">
        <title>Role of unusual P loop ejection and autophosphorylation in HipA-mediated persistence and multidrug tolerance.</title>
        <authorList>
            <person name="Schumacher M.A."/>
            <person name="Min J."/>
            <person name="Link T.M."/>
            <person name="Guan Z."/>
            <person name="Xu W."/>
            <person name="Ahn Y.H."/>
            <person name="Soderblom E.J."/>
            <person name="Kurie J.M."/>
            <person name="Evdokimov A."/>
            <person name="Moseley M.A."/>
            <person name="Lewis K."/>
            <person name="Brennan R.G."/>
        </authorList>
    </citation>
    <scope>X-RAY CRYSTALLOGRAPHY (1.50 ANGSTROMS) PHOSPHORYLATED AND NON-PHOSPHORYLATED AND IN COMPLEX WITH ATP</scope>
    <scope>ATP-BINDING</scope>
    <scope>ACTIVITY REGULATION</scope>
    <scope>PHOSPHORYLATION AT SER-150</scope>
</reference>
<reference evidence="33 34" key="23">
    <citation type="journal article" date="2015" name="Nature">
        <title>HipBA-promoter structures reveal the basis of heritable multidrug tolerance.</title>
        <authorList>
            <person name="Schumacher M.A."/>
            <person name="Balani P."/>
            <person name="Min J."/>
            <person name="Chinnam N.B."/>
            <person name="Hansen S."/>
            <person name="Vulic M."/>
            <person name="Lewis K."/>
            <person name="Brennan R.G."/>
        </authorList>
    </citation>
    <scope>X-RAY CRYSTALLOGRAPHY (3.77 ANGSTROMS) OF 2-437 IN COMPLEX WITH HIPB AND DNA</scope>
    <scope>FUNCTION</scope>
    <scope>SUBUNIT</scope>
    <scope>MUTAGENESIS OF GLY-22; PRO-86 AND ASP-88</scope>
</reference>
<gene>
    <name type="primary">hipA</name>
    <name type="ordered locus">b1507</name>
    <name type="ordered locus">JW1500</name>
</gene>
<organism>
    <name type="scientific">Escherichia coli (strain K12)</name>
    <dbReference type="NCBI Taxonomy" id="83333"/>
    <lineage>
        <taxon>Bacteria</taxon>
        <taxon>Pseudomonadati</taxon>
        <taxon>Pseudomonadota</taxon>
        <taxon>Gammaproteobacteria</taxon>
        <taxon>Enterobacterales</taxon>
        <taxon>Enterobacteriaceae</taxon>
        <taxon>Escherichia</taxon>
    </lineage>
</organism>
<name>HIPA_ECOLI</name>
<comment type="function">
    <text evidence="1 2 3 4 6 8 9 11 12 13 14 15 16 17">Toxic component of a type II toxin-antitoxin (TA) system, first identified by mutations that increase production of persister cells, a fraction of cells that are phenotypic variants not killed by antibiotics, which lead to multidrug tolerance (PubMed:16707675, PubMed:26222023, PubMed:6348026, PubMed:8021189). Persistence may be ultimately due to global remodeling of the persister cell's ribosomes (PubMed:25425348). Phosphorylates Glu-tRNA-ligase (AC P04805, gltX, on 'Ser-239') in vivo (PubMed:24095282, PubMed:24343429). Phosphorylation of GltX prevents it from being charged, leading to an increase in uncharged tRNA(Glu). This induces amino acid starvation and the stringent response via RelA/SpoT and increased (p)ppGpp levels, which inhibits replication, transcription, translation and cell wall synthesis, reducing growth and leading to persistence and multidrug resistance (PubMed:24095282, PubMed:24343429). Once the level of HipA exceeds a threshold cells become dormant, and the length of dormancy is determined by how much HipA levels exceed the threshold (PubMed:20616060). The hipA7 mutation (a double G22S D291A mutation) leads to increased generation of persister cells (cells that survive antibiotic treatment) probably by entering into a dormant state, as well as cold-sensitivity (PubMed:14622409, PubMed:16707675). Wild-type cells produce persisters at a frequency of 10(-6) to 10(-5) whereas hipA7 cells produce about 100-fold more persisters (PubMed:14622409, PubMed:16707675, PubMed:25425348). hipA7 decreases the affinity for antitoxin HipB, leading to increased HipA levels and persistence (PubMed:20616060); depending on the protein level, can be toxic enough to reduce cell growth or even kill cells. Generation of persister cells requires (p)ppGpp as cells lacking relA or relA/spoT generate fewer or no persister cells respectively compared to hipA7 (PubMed:14622409). The toxic effect of HipA is neutralized by its cognate antitoxin HipB (PubMed:20616060). Also neutralized by overexpression of gltX (PubMed:24343429, PubMed:28430938). With HipB acts as a corepressor for transcription of the hipBA promoter (PubMed:8021189); binding of HipA-HipB to DNA induces a 70 degree bend (PubMed:19150849, PubMed:26222023). This brings together and dimerizes 2 HipA molecules, which distorts the promoter region, preventing sigma-factor binding; additionally HipA and HipB would physically prevent RNA core polymerase from contacting the -35 promoter box (PubMed:26222023). May play a role in biofilm formation (PubMed:23329678).</text>
</comment>
<comment type="catalytic activity">
    <reaction evidence="4">
        <text>L-seryl-[protein] + ATP = O-phospho-L-seryl-[protein] + ADP + H(+)</text>
        <dbReference type="Rhea" id="RHEA:17989"/>
        <dbReference type="Rhea" id="RHEA-COMP:9863"/>
        <dbReference type="Rhea" id="RHEA-COMP:11604"/>
        <dbReference type="ChEBI" id="CHEBI:15378"/>
        <dbReference type="ChEBI" id="CHEBI:29999"/>
        <dbReference type="ChEBI" id="CHEBI:30616"/>
        <dbReference type="ChEBI" id="CHEBI:83421"/>
        <dbReference type="ChEBI" id="CHEBI:456216"/>
        <dbReference type="EC" id="2.7.11.1"/>
    </reaction>
</comment>
<comment type="catalytic activity">
    <reaction evidence="4">
        <text>L-threonyl-[protein] + ATP = O-phospho-L-threonyl-[protein] + ADP + H(+)</text>
        <dbReference type="Rhea" id="RHEA:46608"/>
        <dbReference type="Rhea" id="RHEA-COMP:11060"/>
        <dbReference type="Rhea" id="RHEA-COMP:11605"/>
        <dbReference type="ChEBI" id="CHEBI:15378"/>
        <dbReference type="ChEBI" id="CHEBI:30013"/>
        <dbReference type="ChEBI" id="CHEBI:30616"/>
        <dbReference type="ChEBI" id="CHEBI:61977"/>
        <dbReference type="ChEBI" id="CHEBI:456216"/>
        <dbReference type="EC" id="2.7.11.1"/>
    </reaction>
</comment>
<comment type="activity regulation">
    <text evidence="7">Once phosphorylated no longer has kinase activity.</text>
</comment>
<comment type="subunit">
    <text evidence="4 5 6 7 10 11 14">Forms a HipA(2)HipB(2) heterotetramer which can interact with a single operator on DNA (PubMed:19150849). When 2 operators are present each HipB dimer contacts 1 HipA molecule, which are brought together by the DNA bend and dimerize, blocking the HipA active site and inactivating its toxic activity (PubMed:26222023). Mutations present in allele hipA7 (G22S and D291A) decrease the affinity of HipA for HipB (PubMed:20616060).</text>
</comment>
<comment type="interaction">
    <interactant intactId="EBI-560590">
        <id>P23874</id>
    </interactant>
    <interactant intactId="EBI-560582">
        <id>P75989</id>
        <label>bluR</label>
    </interactant>
    <organismsDiffer>false</organismsDiffer>
    <experiments>2</experiments>
</comment>
<comment type="interaction">
    <interactant intactId="EBI-560590">
        <id>P23874</id>
    </interactant>
    <interactant intactId="EBI-1129654">
        <id>P23873</id>
        <label>hipB</label>
    </interactant>
    <organismsDiffer>false</organismsDiffer>
    <experiments>2</experiments>
</comment>
<comment type="PTM">
    <text evidence="3 7">Autophosphorylates intermolecularly on Ser-150; phosphorylated form not seen to bind ATP and no longer has kinase activity.</text>
</comment>
<comment type="mass spectrometry"/>
<comment type="mass spectrometry">
    <text>Phosphorylated form.</text>
</comment>
<comment type="disruption phenotype">
    <text evidence="6 8 17">A hipA or a hipB-hipA operon deletion have no visible phenotype (PubMed:20616060). Initially cells lacking hipA or the hipBA operon were thought not to produce persister cells at a high frequency; this was later shown to be a strain-specific phenotype (PubMed:8021189). A hipA or a hipB-hipA operon deletion show decreased biofilm production in the absence of antibiotics (PubMed:23329678).</text>
</comment>
<comment type="miscellaneous">
    <text evidence="14">The hipA7 allele (G22S and D291A) as well as a P86L mutation have been identified in E.coli isolates from human patients with urinary tract infections, showing the mutations may be clinically relevant (PubMed:26222023).</text>
</comment>
<comment type="similarity">
    <text evidence="18">Belongs to the HipA Ser/Thr kinase family.</text>
</comment>
<comment type="caution">
    <text evidence="20 21">Has been reported to phosphorylate EF-Tu in vitro (on 'Thr-383') (PubMed:19150849). According to another report, does not phosphorylate EF-Tu (PubMed:19622872).</text>
</comment>